<gene>
    <name type="primary">Uck2</name>
    <name type="synonym">Umpk</name>
</gene>
<comment type="function">
    <text evidence="1">Phosphorylates uridine and cytidine to uridine monophosphate and cytidine monophosphate. Does not phosphorylate deoxyribonucleosides or purine ribonucleosides. Can use ATP or GTP as a phosphate donor.</text>
</comment>
<comment type="catalytic activity">
    <reaction evidence="1">
        <text>uridine + ATP = UMP + ADP + H(+)</text>
        <dbReference type="Rhea" id="RHEA:16825"/>
        <dbReference type="ChEBI" id="CHEBI:15378"/>
        <dbReference type="ChEBI" id="CHEBI:16704"/>
        <dbReference type="ChEBI" id="CHEBI:30616"/>
        <dbReference type="ChEBI" id="CHEBI:57865"/>
        <dbReference type="ChEBI" id="CHEBI:456216"/>
        <dbReference type="EC" id="2.7.1.48"/>
    </reaction>
</comment>
<comment type="catalytic activity">
    <reaction evidence="1">
        <text>cytidine + ATP = CMP + ADP + H(+)</text>
        <dbReference type="Rhea" id="RHEA:24674"/>
        <dbReference type="ChEBI" id="CHEBI:15378"/>
        <dbReference type="ChEBI" id="CHEBI:17562"/>
        <dbReference type="ChEBI" id="CHEBI:30616"/>
        <dbReference type="ChEBI" id="CHEBI:60377"/>
        <dbReference type="ChEBI" id="CHEBI:456216"/>
        <dbReference type="EC" id="2.7.1.48"/>
    </reaction>
</comment>
<comment type="pathway">
    <text evidence="1">Pyrimidine metabolism; CTP biosynthesis via salvage pathway; CTP from cytidine: step 1/3.</text>
</comment>
<comment type="pathway">
    <text evidence="1">Pyrimidine metabolism; UMP biosynthesis via salvage pathway; UMP from uridine: step 1/1.</text>
</comment>
<comment type="subunit">
    <text evidence="1">Homotetramer.</text>
</comment>
<comment type="interaction">
    <interactant intactId="EBI-644712">
        <id>Q99PM9</id>
    </interactant>
    <interactant intactId="EBI-1688">
        <id>Q60631</id>
        <label>Grb2</label>
    </interactant>
    <organismsDiffer>false</organismsDiffer>
    <experiments>3</experiments>
</comment>
<comment type="similarity">
    <text evidence="3">Belongs to the uridine kinase family.</text>
</comment>
<proteinExistence type="evidence at protein level"/>
<keyword id="KW-0007">Acetylation</keyword>
<keyword id="KW-0067">ATP-binding</keyword>
<keyword id="KW-0418">Kinase</keyword>
<keyword id="KW-0547">Nucleotide-binding</keyword>
<keyword id="KW-0597">Phosphoprotein</keyword>
<keyword id="KW-1185">Reference proteome</keyword>
<keyword id="KW-0808">Transferase</keyword>
<accession>Q99PM9</accession>
<evidence type="ECO:0000250" key="1">
    <source>
        <dbReference type="UniProtKB" id="Q9BZX2"/>
    </source>
</evidence>
<evidence type="ECO:0000256" key="2">
    <source>
        <dbReference type="SAM" id="MobiDB-lite"/>
    </source>
</evidence>
<evidence type="ECO:0000305" key="3"/>
<name>UCK2_MOUSE</name>
<reference key="1">
    <citation type="journal article" date="2001" name="Mol. Pharmacol.">
        <title>Phosphorylation of uridine and cytidine nucleoside analogs by two human uridine-cytidine kinases.</title>
        <authorList>
            <person name="Van Rompay A.R."/>
            <person name="Norda A."/>
            <person name="Linden K."/>
            <person name="Johansson M."/>
            <person name="Karlsson A."/>
        </authorList>
    </citation>
    <scope>NUCLEOTIDE SEQUENCE [MRNA]</scope>
</reference>
<reference key="2">
    <citation type="journal article" date="2004" name="Genome Res.">
        <title>The status, quality, and expansion of the NIH full-length cDNA project: the Mammalian Gene Collection (MGC).</title>
        <authorList>
            <consortium name="The MGC Project Team"/>
        </authorList>
    </citation>
    <scope>NUCLEOTIDE SEQUENCE [LARGE SCALE MRNA]</scope>
    <source>
        <strain>FVB/N</strain>
        <tissue>Mammary gland</tissue>
    </source>
</reference>
<reference key="3">
    <citation type="journal article" date="2010" name="Cell">
        <title>A tissue-specific atlas of mouse protein phosphorylation and expression.</title>
        <authorList>
            <person name="Huttlin E.L."/>
            <person name="Jedrychowski M.P."/>
            <person name="Elias J.E."/>
            <person name="Goswami T."/>
            <person name="Rad R."/>
            <person name="Beausoleil S.A."/>
            <person name="Villen J."/>
            <person name="Haas W."/>
            <person name="Sowa M.E."/>
            <person name="Gygi S.P."/>
        </authorList>
    </citation>
    <scope>IDENTIFICATION BY MASS SPECTROMETRY [LARGE SCALE ANALYSIS]</scope>
    <source>
        <tissue>Spleen</tissue>
    </source>
</reference>
<sequence length="261" mass="29404">MAGDSEQTLQNHQQPNGGEPFLIGVSGGTASGKSSVCAKIVQLLGQNEVDYHQKQVVILSQDSFYRVLTSEQKAKALKGQFNFDHPDAFDNELIFKTLKEITEGKTVQIPVYDFVSHSRKEETVTIYPADVVLFEGILAFYSQEVRDLFQMKLFVDTDADTRLSRRVLRDISERGRDLEQILSQYITFVKPAFEEFCLPTKKYADVIIPRGADNLVAINLIVQHIQDILNGGLSKRQTNGYLNGYTPSRKRQASESSSRPH</sequence>
<feature type="initiator methionine" description="Removed" evidence="1">
    <location>
        <position position="1"/>
    </location>
</feature>
<feature type="chain" id="PRO_0000164456" description="Uridine-cytidine kinase 2">
    <location>
        <begin position="2"/>
        <end position="261"/>
    </location>
</feature>
<feature type="region of interest" description="Disordered" evidence="2">
    <location>
        <begin position="1"/>
        <end position="24"/>
    </location>
</feature>
<feature type="region of interest" description="Disordered" evidence="2">
    <location>
        <begin position="240"/>
        <end position="261"/>
    </location>
</feature>
<feature type="compositionally biased region" description="Polar residues" evidence="2">
    <location>
        <begin position="1"/>
        <end position="16"/>
    </location>
</feature>
<feature type="binding site" evidence="1">
    <location>
        <begin position="27"/>
        <end position="35"/>
    </location>
    <ligand>
        <name>ATP</name>
        <dbReference type="ChEBI" id="CHEBI:30616"/>
    </ligand>
</feature>
<feature type="binding site" evidence="1">
    <location>
        <position position="84"/>
    </location>
    <ligand>
        <name>substrate</name>
    </ligand>
</feature>
<feature type="binding site" evidence="1">
    <location>
        <position position="112"/>
    </location>
    <ligand>
        <name>substrate</name>
    </ligand>
</feature>
<feature type="binding site" evidence="1">
    <location>
        <position position="117"/>
    </location>
    <ligand>
        <name>substrate</name>
    </ligand>
</feature>
<feature type="binding site" evidence="1">
    <location>
        <position position="166"/>
    </location>
    <ligand>
        <name>substrate</name>
    </ligand>
</feature>
<feature type="binding site" evidence="1">
    <location>
        <position position="176"/>
    </location>
    <ligand>
        <name>substrate</name>
    </ligand>
</feature>
<feature type="binding site" evidence="1">
    <location>
        <position position="184"/>
    </location>
    <ligand>
        <name>substrate</name>
    </ligand>
</feature>
<feature type="binding site" evidence="1">
    <location>
        <position position="213"/>
    </location>
    <ligand>
        <name>ATP</name>
        <dbReference type="ChEBI" id="CHEBI:30616"/>
    </ligand>
</feature>
<feature type="modified residue" description="N-acetylalanine" evidence="1">
    <location>
        <position position="2"/>
    </location>
</feature>
<feature type="modified residue" description="Phosphoserine" evidence="1">
    <location>
        <position position="254"/>
    </location>
</feature>
<dbReference type="EC" id="2.7.1.48" evidence="1"/>
<dbReference type="EMBL" id="AF236636">
    <property type="protein sequence ID" value="AAK14052.1"/>
    <property type="molecule type" value="mRNA"/>
</dbReference>
<dbReference type="EMBL" id="BC023789">
    <property type="protein sequence ID" value="AAH23789.1"/>
    <property type="molecule type" value="mRNA"/>
</dbReference>
<dbReference type="CCDS" id="CCDS15455.1"/>
<dbReference type="RefSeq" id="NP_109649.1">
    <property type="nucleotide sequence ID" value="NM_030724.4"/>
</dbReference>
<dbReference type="SMR" id="Q99PM9"/>
<dbReference type="BioGRID" id="219851">
    <property type="interactions" value="3"/>
</dbReference>
<dbReference type="FunCoup" id="Q99PM9">
    <property type="interactions" value="1882"/>
</dbReference>
<dbReference type="IntAct" id="Q99PM9">
    <property type="interactions" value="3"/>
</dbReference>
<dbReference type="STRING" id="10090.ENSMUSP00000060202"/>
<dbReference type="iPTMnet" id="Q99PM9"/>
<dbReference type="PhosphoSitePlus" id="Q99PM9"/>
<dbReference type="PaxDb" id="10090-ENSMUSP00000027839"/>
<dbReference type="ProteomicsDB" id="299636"/>
<dbReference type="Pumba" id="Q99PM9"/>
<dbReference type="Antibodypedia" id="34333">
    <property type="antibodies" value="204 antibodies from 27 providers"/>
</dbReference>
<dbReference type="DNASU" id="80914"/>
<dbReference type="Ensembl" id="ENSMUST00000053686.9">
    <property type="protein sequence ID" value="ENSMUSP00000060202.5"/>
    <property type="gene ID" value="ENSMUSG00000026558.14"/>
</dbReference>
<dbReference type="GeneID" id="80914"/>
<dbReference type="KEGG" id="mmu:80914"/>
<dbReference type="UCSC" id="uc007dku.2">
    <property type="organism name" value="mouse"/>
</dbReference>
<dbReference type="AGR" id="MGI:1931744"/>
<dbReference type="CTD" id="7371"/>
<dbReference type="MGI" id="MGI:1931744">
    <property type="gene designation" value="Uck2"/>
</dbReference>
<dbReference type="VEuPathDB" id="HostDB:ENSMUSG00000026558"/>
<dbReference type="eggNOG" id="KOG4203">
    <property type="taxonomic scope" value="Eukaryota"/>
</dbReference>
<dbReference type="GeneTree" id="ENSGT01020000230412"/>
<dbReference type="HOGENOM" id="CLU_021278_1_1_1"/>
<dbReference type="InParanoid" id="Q99PM9"/>
<dbReference type="OMA" id="HRQPFLI"/>
<dbReference type="OrthoDB" id="10257085at2759"/>
<dbReference type="PhylomeDB" id="Q99PM9"/>
<dbReference type="TreeFam" id="TF316686"/>
<dbReference type="Reactome" id="R-MMU-73614">
    <property type="pathway name" value="Pyrimidine salvage"/>
</dbReference>
<dbReference type="UniPathway" id="UPA00574">
    <property type="reaction ID" value="UER00637"/>
</dbReference>
<dbReference type="UniPathway" id="UPA00579">
    <property type="reaction ID" value="UER00640"/>
</dbReference>
<dbReference type="BioGRID-ORCS" id="80914">
    <property type="hits" value="4 hits in 81 CRISPR screens"/>
</dbReference>
<dbReference type="ChiTaRS" id="Uck2">
    <property type="organism name" value="mouse"/>
</dbReference>
<dbReference type="PRO" id="PR:Q99PM9"/>
<dbReference type="Proteomes" id="UP000000589">
    <property type="component" value="Chromosome 1"/>
</dbReference>
<dbReference type="RNAct" id="Q99PM9">
    <property type="molecule type" value="protein"/>
</dbReference>
<dbReference type="Bgee" id="ENSMUSG00000026558">
    <property type="expression patterns" value="Expressed in ectoderm and 269 other cell types or tissues"/>
</dbReference>
<dbReference type="ExpressionAtlas" id="Q99PM9">
    <property type="expression patterns" value="baseline and differential"/>
</dbReference>
<dbReference type="GO" id="GO:0005524">
    <property type="term" value="F:ATP binding"/>
    <property type="evidence" value="ECO:0007669"/>
    <property type="project" value="UniProtKB-KW"/>
</dbReference>
<dbReference type="GO" id="GO:0043771">
    <property type="term" value="F:cytidine kinase activity"/>
    <property type="evidence" value="ECO:0000250"/>
    <property type="project" value="UniProtKB"/>
</dbReference>
<dbReference type="GO" id="GO:0042802">
    <property type="term" value="F:identical protein binding"/>
    <property type="evidence" value="ECO:0007669"/>
    <property type="project" value="Ensembl"/>
</dbReference>
<dbReference type="GO" id="GO:0004849">
    <property type="term" value="F:uridine kinase activity"/>
    <property type="evidence" value="ECO:0000250"/>
    <property type="project" value="UniProtKB"/>
</dbReference>
<dbReference type="GO" id="GO:0044211">
    <property type="term" value="P:CTP salvage"/>
    <property type="evidence" value="ECO:0000250"/>
    <property type="project" value="UniProtKB"/>
</dbReference>
<dbReference type="GO" id="GO:0044206">
    <property type="term" value="P:UMP salvage"/>
    <property type="evidence" value="ECO:0000250"/>
    <property type="project" value="UniProtKB"/>
</dbReference>
<dbReference type="CDD" id="cd02023">
    <property type="entry name" value="UMPK"/>
    <property type="match status" value="1"/>
</dbReference>
<dbReference type="FunFam" id="3.40.50.300:FF:000297">
    <property type="entry name" value="Uridine-cytidine kinase 2"/>
    <property type="match status" value="1"/>
</dbReference>
<dbReference type="Gene3D" id="3.40.50.300">
    <property type="entry name" value="P-loop containing nucleotide triphosphate hydrolases"/>
    <property type="match status" value="1"/>
</dbReference>
<dbReference type="InterPro" id="IPR027417">
    <property type="entry name" value="P-loop_NTPase"/>
</dbReference>
<dbReference type="InterPro" id="IPR006083">
    <property type="entry name" value="PRK/URK"/>
</dbReference>
<dbReference type="InterPro" id="IPR000764">
    <property type="entry name" value="Uridine_kinase-like"/>
</dbReference>
<dbReference type="NCBIfam" id="NF004018">
    <property type="entry name" value="PRK05480.1"/>
    <property type="match status" value="1"/>
</dbReference>
<dbReference type="NCBIfam" id="TIGR00235">
    <property type="entry name" value="udk"/>
    <property type="match status" value="1"/>
</dbReference>
<dbReference type="PANTHER" id="PTHR10285">
    <property type="entry name" value="URIDINE KINASE"/>
    <property type="match status" value="1"/>
</dbReference>
<dbReference type="Pfam" id="PF00485">
    <property type="entry name" value="PRK"/>
    <property type="match status" value="1"/>
</dbReference>
<dbReference type="PRINTS" id="PR00988">
    <property type="entry name" value="URIDINKINASE"/>
</dbReference>
<dbReference type="SUPFAM" id="SSF52540">
    <property type="entry name" value="P-loop containing nucleoside triphosphate hydrolases"/>
    <property type="match status" value="1"/>
</dbReference>
<organism>
    <name type="scientific">Mus musculus</name>
    <name type="common">Mouse</name>
    <dbReference type="NCBI Taxonomy" id="10090"/>
    <lineage>
        <taxon>Eukaryota</taxon>
        <taxon>Metazoa</taxon>
        <taxon>Chordata</taxon>
        <taxon>Craniata</taxon>
        <taxon>Vertebrata</taxon>
        <taxon>Euteleostomi</taxon>
        <taxon>Mammalia</taxon>
        <taxon>Eutheria</taxon>
        <taxon>Euarchontoglires</taxon>
        <taxon>Glires</taxon>
        <taxon>Rodentia</taxon>
        <taxon>Myomorpha</taxon>
        <taxon>Muroidea</taxon>
        <taxon>Muridae</taxon>
        <taxon>Murinae</taxon>
        <taxon>Mus</taxon>
        <taxon>Mus</taxon>
    </lineage>
</organism>
<protein>
    <recommendedName>
        <fullName>Uridine-cytidine kinase 2</fullName>
        <shortName>UCK 2</shortName>
        <ecNumber evidence="1">2.7.1.48</ecNumber>
    </recommendedName>
    <alternativeName>
        <fullName>Cytidine monophosphokinase 2</fullName>
    </alternativeName>
    <alternativeName>
        <fullName>Uridine monophosphokinase 2</fullName>
    </alternativeName>
</protein>